<evidence type="ECO:0000250" key="1">
    <source>
        <dbReference type="UniProtKB" id="Q1K8B6"/>
    </source>
</evidence>
<evidence type="ECO:0000255" key="2"/>
<evidence type="ECO:0000255" key="3">
    <source>
        <dbReference type="PROSITE-ProRule" id="PRU00498"/>
    </source>
</evidence>
<evidence type="ECO:0000255" key="4">
    <source>
        <dbReference type="PROSITE-ProRule" id="PRU00597"/>
    </source>
</evidence>
<evidence type="ECO:0000256" key="5">
    <source>
        <dbReference type="SAM" id="MobiDB-lite"/>
    </source>
</evidence>
<evidence type="ECO:0000269" key="6">
    <source>
    </source>
</evidence>
<evidence type="ECO:0000269" key="7">
    <source>
    </source>
</evidence>
<evidence type="ECO:0000269" key="8">
    <source>
    </source>
</evidence>
<evidence type="ECO:0000269" key="9">
    <source>
    </source>
</evidence>
<evidence type="ECO:0000269" key="10">
    <source>
    </source>
</evidence>
<evidence type="ECO:0000269" key="11">
    <source>
    </source>
</evidence>
<evidence type="ECO:0000269" key="12">
    <source>
    </source>
</evidence>
<evidence type="ECO:0000269" key="13">
    <source>
    </source>
</evidence>
<evidence type="ECO:0000303" key="14">
    <source>
    </source>
</evidence>
<evidence type="ECO:0000303" key="15">
    <source>
    </source>
</evidence>
<evidence type="ECO:0000305" key="16"/>
<evidence type="ECO:0007744" key="17">
    <source>
        <dbReference type="PDB" id="4D7U"/>
    </source>
</evidence>
<evidence type="ECO:0007744" key="18">
    <source>
        <dbReference type="PDB" id="4D7V"/>
    </source>
</evidence>
<evidence type="ECO:0007829" key="19">
    <source>
        <dbReference type="PDB" id="4D7U"/>
    </source>
</evidence>
<evidence type="ECO:0007829" key="20">
    <source>
        <dbReference type="PDB" id="4D7V"/>
    </source>
</evidence>
<feature type="signal peptide" evidence="2">
    <location>
        <begin position="1"/>
        <end position="16"/>
    </location>
</feature>
<feature type="chain" id="PRO_5004291284" description="AA9 family lytic polysaccharide monooxygenase C">
    <location>
        <begin position="17"/>
        <end position="359"/>
    </location>
</feature>
<feature type="domain" description="CBM1" evidence="4">
    <location>
        <begin position="323"/>
        <end position="358"/>
    </location>
</feature>
<feature type="region of interest" description="Disordered" evidence="5">
    <location>
        <begin position="244"/>
        <end position="320"/>
    </location>
</feature>
<feature type="compositionally biased region" description="Low complexity" evidence="5">
    <location>
        <begin position="251"/>
        <end position="296"/>
    </location>
</feature>
<feature type="compositionally biased region" description="Polar residues" evidence="5">
    <location>
        <begin position="307"/>
        <end position="319"/>
    </location>
</feature>
<feature type="binding site" evidence="9 17">
    <location>
        <position position="17"/>
    </location>
    <ligand>
        <name>Cu(2+)</name>
        <dbReference type="ChEBI" id="CHEBI:29036"/>
    </ligand>
</feature>
<feature type="binding site" evidence="9 17">
    <location>
        <position position="99"/>
    </location>
    <ligand>
        <name>Cu(2+)</name>
        <dbReference type="ChEBI" id="CHEBI:29036"/>
    </ligand>
</feature>
<feature type="binding site" evidence="1">
    <location>
        <position position="171"/>
    </location>
    <ligand>
        <name>O2</name>
        <dbReference type="ChEBI" id="CHEBI:15379"/>
    </ligand>
</feature>
<feature type="binding site" evidence="1">
    <location>
        <position position="180"/>
    </location>
    <ligand>
        <name>O2</name>
        <dbReference type="ChEBI" id="CHEBI:15379"/>
    </ligand>
</feature>
<feature type="binding site" evidence="9 17">
    <location>
        <position position="182"/>
    </location>
    <ligand>
        <name>Cu(2+)</name>
        <dbReference type="ChEBI" id="CHEBI:29036"/>
    </ligand>
</feature>
<feature type="glycosylation site" description="N-linked (GlcNAc...) asparagine" evidence="3">
    <location>
        <position position="189"/>
    </location>
</feature>
<feature type="glycosylation site" description="N-linked (GlcNAc...) asparagine" evidence="3">
    <location>
        <position position="284"/>
    </location>
</feature>
<feature type="disulfide bond" evidence="9 17 18">
    <location>
        <begin position="55"/>
        <end position="185"/>
    </location>
</feature>
<feature type="disulfide bond" evidence="9 17 18">
    <location>
        <begin position="155"/>
        <end position="243"/>
    </location>
</feature>
<feature type="mutagenesis site" description="Leads to lower C4 oxidation and higher C1-oxidation." evidence="10">
    <original>Y</original>
    <variation>A</variation>
    <variation>F</variation>
    <variation>W</variation>
    <location>
        <position position="220"/>
    </location>
</feature>
<feature type="strand" evidence="19">
    <location>
        <begin position="19"/>
        <end position="25"/>
    </location>
</feature>
<feature type="turn" evidence="19">
    <location>
        <begin position="32"/>
        <end position="35"/>
    </location>
</feature>
<feature type="strand" evidence="19">
    <location>
        <begin position="36"/>
        <end position="42"/>
    </location>
</feature>
<feature type="helix" evidence="19">
    <location>
        <begin position="52"/>
        <end position="55"/>
    </location>
</feature>
<feature type="strand" evidence="19">
    <location>
        <begin position="57"/>
        <end position="61"/>
    </location>
</feature>
<feature type="strand" evidence="19">
    <location>
        <begin position="66"/>
        <end position="69"/>
    </location>
</feature>
<feature type="strand" evidence="19">
    <location>
        <begin position="73"/>
        <end position="82"/>
    </location>
</feature>
<feature type="helix" evidence="19">
    <location>
        <begin position="83"/>
        <end position="85"/>
    </location>
</feature>
<feature type="strand" evidence="20">
    <location>
        <begin position="88"/>
        <end position="90"/>
    </location>
</feature>
<feature type="strand" evidence="19">
    <location>
        <begin position="93"/>
        <end position="95"/>
    </location>
</feature>
<feature type="strand" evidence="19">
    <location>
        <begin position="103"/>
        <end position="109"/>
    </location>
</feature>
<feature type="turn" evidence="19">
    <location>
        <begin position="113"/>
        <end position="115"/>
    </location>
</feature>
<feature type="strand" evidence="19">
    <location>
        <begin position="123"/>
        <end position="129"/>
    </location>
</feature>
<feature type="helix" evidence="19">
    <location>
        <begin position="137"/>
        <end position="143"/>
    </location>
</feature>
<feature type="turn" evidence="19">
    <location>
        <begin position="144"/>
        <end position="146"/>
    </location>
</feature>
<feature type="strand" evidence="19">
    <location>
        <begin position="147"/>
        <end position="151"/>
    </location>
</feature>
<feature type="strand" evidence="19">
    <location>
        <begin position="154"/>
        <end position="156"/>
    </location>
</feature>
<feature type="strand" evidence="19">
    <location>
        <begin position="159"/>
        <end position="169"/>
    </location>
</feature>
<feature type="turn" evidence="19">
    <location>
        <begin position="171"/>
        <end position="174"/>
    </location>
</feature>
<feature type="strand" evidence="19">
    <location>
        <begin position="179"/>
        <end position="192"/>
    </location>
</feature>
<feature type="turn" evidence="19">
    <location>
        <begin position="204"/>
        <end position="206"/>
    </location>
</feature>
<feature type="turn" evidence="19">
    <location>
        <begin position="213"/>
        <end position="215"/>
    </location>
</feature>
<feature type="strand" evidence="19">
    <location>
        <begin position="224"/>
        <end position="227"/>
    </location>
</feature>
<feature type="helix" evidence="19">
    <location>
        <begin position="228"/>
        <end position="230"/>
    </location>
</feature>
<name>LP9C_NEUCR</name>
<protein>
    <recommendedName>
        <fullName evidence="15">AA9 family lytic polysaccharide monooxygenase C</fullName>
        <shortName evidence="15">LPMO9C</shortName>
        <ecNumber evidence="7 8 9 10 11 12 13">1.14.99.56</ecNumber>
    </recommendedName>
    <alternativeName>
        <fullName evidence="16">Endo-1,4-beta-glucanase LPMO9C</fullName>
        <shortName evidence="16">Endoglucanase LPMO9C</shortName>
    </alternativeName>
    <alternativeName>
        <fullName evidence="16">Glycosyl hydrolase 61 family protein 3</fullName>
    </alternativeName>
</protein>
<gene>
    <name type="primary">gh61-3</name>
    <name evidence="15" type="synonym">LPMO9C</name>
    <name evidence="14" type="synonym">PMO-02916</name>
    <name type="ORF">NCU02916</name>
</gene>
<sequence length="359" mass="35755">MKTGSILAALVASASAHTIFQKVSVNGADQGQLKGIRAPANNNPVTDVMSSDIICNAVTMKDSNVLTVPAGAKVGHFWGHEIGGAAGPNDADNPIAASHKGPIMVYLAKVDNAATTGTSGLKWFKVAEAGLSNGKWAVDDLIANNGWSYFDMPTCIAPGQYLMRAELIALHNAGSQAGAQFYIGCAQINVTGGGSASPSNTVSFPGAYSASDPGILINIYGGSGKTDNGGKPYQIPGPALFTCPAGGSGGSSPAPATTASTPKPTSASAPKPVSTTASTPKPTNGSGSGTGAAHSTKCGGSKPAATTKASNPQPTNGGNSAVRAAALYGQCGGKGWTGPTSCASGTCKFSNDWYSQCLP</sequence>
<reference key="1">
    <citation type="journal article" date="2003" name="Nature">
        <title>The genome sequence of the filamentous fungus Neurospora crassa.</title>
        <authorList>
            <person name="Galagan J.E."/>
            <person name="Calvo S.E."/>
            <person name="Borkovich K.A."/>
            <person name="Selker E.U."/>
            <person name="Read N.D."/>
            <person name="Jaffe D.B."/>
            <person name="FitzHugh W."/>
            <person name="Ma L.-J."/>
            <person name="Smirnov S."/>
            <person name="Purcell S."/>
            <person name="Rehman B."/>
            <person name="Elkins T."/>
            <person name="Engels R."/>
            <person name="Wang S."/>
            <person name="Nielsen C.B."/>
            <person name="Butler J."/>
            <person name="Endrizzi M."/>
            <person name="Qui D."/>
            <person name="Ianakiev P."/>
            <person name="Bell-Pedersen D."/>
            <person name="Nelson M.A."/>
            <person name="Werner-Washburne M."/>
            <person name="Selitrennikoff C.P."/>
            <person name="Kinsey J.A."/>
            <person name="Braun E.L."/>
            <person name="Zelter A."/>
            <person name="Schulte U."/>
            <person name="Kothe G.O."/>
            <person name="Jedd G."/>
            <person name="Mewes H.-W."/>
            <person name="Staben C."/>
            <person name="Marcotte E."/>
            <person name="Greenberg D."/>
            <person name="Roy A."/>
            <person name="Foley K."/>
            <person name="Naylor J."/>
            <person name="Stange-Thomann N."/>
            <person name="Barrett R."/>
            <person name="Gnerre S."/>
            <person name="Kamal M."/>
            <person name="Kamvysselis M."/>
            <person name="Mauceli E.W."/>
            <person name="Bielke C."/>
            <person name="Rudd S."/>
            <person name="Frishman D."/>
            <person name="Krystofova S."/>
            <person name="Rasmussen C."/>
            <person name="Metzenberg R.L."/>
            <person name="Perkins D.D."/>
            <person name="Kroken S."/>
            <person name="Cogoni C."/>
            <person name="Macino G."/>
            <person name="Catcheside D.E.A."/>
            <person name="Li W."/>
            <person name="Pratt R.J."/>
            <person name="Osmani S.A."/>
            <person name="DeSouza C.P.C."/>
            <person name="Glass N.L."/>
            <person name="Orbach M.J."/>
            <person name="Berglund J.A."/>
            <person name="Voelker R."/>
            <person name="Yarden O."/>
            <person name="Plamann M."/>
            <person name="Seiler S."/>
            <person name="Dunlap J.C."/>
            <person name="Radford A."/>
            <person name="Aramayo R."/>
            <person name="Natvig D.O."/>
            <person name="Alex L.A."/>
            <person name="Mannhaupt G."/>
            <person name="Ebbole D.J."/>
            <person name="Freitag M."/>
            <person name="Paulsen I."/>
            <person name="Sachs M.S."/>
            <person name="Lander E.S."/>
            <person name="Nusbaum C."/>
            <person name="Birren B.W."/>
        </authorList>
    </citation>
    <scope>NUCLEOTIDE SEQUENCE [LARGE SCALE GENOMIC DNA]</scope>
    <source>
        <strain>ATCC 24698 / 74-OR23-1A / CBS 708.71 / DSM 1257 / FGSC 987</strain>
    </source>
</reference>
<reference key="2">
    <citation type="journal article" date="2012" name="Biotechnol. Biofuels">
        <title>Production of four Neurospora crassa lytic polysaccharide monooxygenases in Pichia pastoris monitored by a fluorimetric assay.</title>
        <authorList>
            <person name="Kittl R."/>
            <person name="Kracher D."/>
            <person name="Burgstaller D."/>
            <person name="Haltrich D."/>
            <person name="Ludwig R."/>
        </authorList>
    </citation>
    <scope>INDUCTION</scope>
    <scope>SUBCELLULAR LOCATION</scope>
    <scope>FUNCTION</scope>
</reference>
<reference key="3">
    <citation type="journal article" date="2014" name="J. Biol. Chem.">
        <title>A C4-oxidizing lytic polysaccharide monooxygenase cleaving both cellulose and cello-oligosaccharides.</title>
        <authorList>
            <person name="Isaksen T."/>
            <person name="Westereng B."/>
            <person name="Aachmann F.L."/>
            <person name="Agger J.W."/>
            <person name="Kracher D."/>
            <person name="Kittl R."/>
            <person name="Ludwig R."/>
            <person name="Haltrich D."/>
            <person name="Eijsink V.G."/>
            <person name="Horn S.J."/>
        </authorList>
    </citation>
    <scope>FUNCTION</scope>
    <scope>CATALYTIC ACTIVITY</scope>
</reference>
<reference key="4">
    <citation type="journal article" date="2014" name="Proc. Natl. Acad. Sci. U.S.A.">
        <title>Discovery of LPMO activity on hemicelluloses shows the importance of oxidative processes in plant cell wall degradation.</title>
        <authorList>
            <person name="Agger J.W."/>
            <person name="Isaksen T."/>
            <person name="Varnai A."/>
            <person name="Vidal-Melgosa S."/>
            <person name="Willats W.G."/>
            <person name="Ludwig R."/>
            <person name="Horn S.J."/>
            <person name="Eijsink V.G."/>
            <person name="Westereng B."/>
        </authorList>
    </citation>
    <scope>FUNCTION</scope>
    <scope>CATALYTIC ACTIVITY</scope>
    <scope>BIOTECHNOLOGY</scope>
</reference>
<reference key="5">
    <citation type="journal article" date="2019" name="Biotechnol. J.">
        <title>Structural features on the substrate-sinding surface of fungal lytic polysaccharide monooxygenases determine their oxidative regioselectivity.</title>
        <authorList>
            <person name="Danneels B."/>
            <person name="Tanghe M."/>
            <person name="Desmet T."/>
        </authorList>
    </citation>
    <scope>FUNCTION</scope>
    <scope>CATALYTIC ACTIVITY</scope>
    <scope>DOMAIN</scope>
    <scope>MUTAGENESIS OF TYR-220</scope>
</reference>
<reference key="6">
    <citation type="journal article" date="2019" name="Int. J. Mol. Sci.">
        <title>Influence of lytic polysaccharide monooxygenase active site segments on activity and affinity.</title>
        <authorList>
            <person name="Laurent C.V.F.P."/>
            <person name="Sun P."/>
            <person name="Scheiblbrandner S."/>
            <person name="Csarman F."/>
            <person name="Cannazza P."/>
            <person name="Frommhagen M."/>
            <person name="van Berkel W.J.H."/>
            <person name="Oostenbrink C."/>
            <person name="Kabel M.A."/>
            <person name="Ludwig R."/>
        </authorList>
    </citation>
    <scope>FUNCTION</scope>
    <scope>CATALYTIC ACTIVITY</scope>
    <scope>BIOPHYSICOCHEMICAL PROPERTIES</scope>
    <scope>DOMAIN</scope>
</reference>
<reference key="7">
    <citation type="journal article" date="2022" name="Appl. Environ. Microbiol.">
        <title>Comparison of six lytic polysaccharide monooxygenases from Thermothielavioides terrestris shows that functional variation underlies the multiplicity of LPMO genes in filamentous fungi.</title>
        <authorList>
            <person name="Tolgo M."/>
            <person name="Hegnar O.A."/>
            <person name="Oestby H."/>
            <person name="Varnai A."/>
            <person name="Vilaplana F."/>
            <person name="Eijsink V.G.H."/>
            <person name="Olsson L."/>
        </authorList>
    </citation>
    <scope>FUNCTION</scope>
    <scope>CATALYTIC ACTIVITY</scope>
</reference>
<reference key="8">
    <citation type="journal article" date="2022" name="Nat. Commun.">
        <title>Investigating lytic polysaccharide monooxygenase-assisted wood cell wall degradation with microsensors.</title>
        <authorList>
            <person name="Chang H."/>
            <person name="Gacias Amengual N."/>
            <person name="Botz A."/>
            <person name="Schwaiger L."/>
            <person name="Kracher D."/>
            <person name="Scheiblbrandner S."/>
            <person name="Csarman F."/>
            <person name="Ludwig R."/>
        </authorList>
    </citation>
    <scope>FUNCTION</scope>
    <scope>CATALYTIC ACTIVITY</scope>
    <scope>ACTIVITY REGULATION</scope>
    <scope>SUBCELLULAR LOCATION</scope>
    <scope>BIOTECHNOLOGY</scope>
</reference>
<reference evidence="17 18" key="9">
    <citation type="journal article" date="2015" name="J. Biol. Chem.">
        <title>Structural and functional characterization of a lytic polysaccharide monooxygenase with broad substrate specificity.</title>
        <authorList>
            <person name="Borisova A.S."/>
            <person name="Isaksen T."/>
            <person name="Dimarogona M."/>
            <person name="Kognole A.A."/>
            <person name="Mathiesen G."/>
            <person name="Varnai A."/>
            <person name="Rohr A.K."/>
            <person name="Payne C.M."/>
            <person name="Sorlie M."/>
            <person name="Sandgren M."/>
            <person name="Eijsink V.G."/>
        </authorList>
    </citation>
    <scope>X-RAY CRYSTALLOGRAPHY (1.56 ANGSTROMS) OF 17-243</scope>
    <scope>DISULFIDE BONDS</scope>
    <scope>COFACTOR</scope>
    <scope>FUNCTION</scope>
    <scope>CATALYTIC ACTIVITY</scope>
    <scope>DOMAIN</scope>
</reference>
<organism>
    <name type="scientific">Neurospora crassa (strain ATCC 24698 / 74-OR23-1A / CBS 708.71 / DSM 1257 / FGSC 987)</name>
    <dbReference type="NCBI Taxonomy" id="367110"/>
    <lineage>
        <taxon>Eukaryota</taxon>
        <taxon>Fungi</taxon>
        <taxon>Dikarya</taxon>
        <taxon>Ascomycota</taxon>
        <taxon>Pezizomycotina</taxon>
        <taxon>Sordariomycetes</taxon>
        <taxon>Sordariomycetidae</taxon>
        <taxon>Sordariales</taxon>
        <taxon>Sordariaceae</taxon>
        <taxon>Neurospora</taxon>
    </lineage>
</organism>
<keyword id="KW-0002">3D-structure</keyword>
<keyword id="KW-0119">Carbohydrate metabolism</keyword>
<keyword id="KW-0136">Cellulose degradation</keyword>
<keyword id="KW-0186">Copper</keyword>
<keyword id="KW-1015">Disulfide bond</keyword>
<keyword id="KW-0325">Glycoprotein</keyword>
<keyword id="KW-0479">Metal-binding</keyword>
<keyword id="KW-0503">Monooxygenase</keyword>
<keyword id="KW-0560">Oxidoreductase</keyword>
<keyword id="KW-0624">Polysaccharide degradation</keyword>
<keyword id="KW-1185">Reference proteome</keyword>
<keyword id="KW-0964">Secreted</keyword>
<keyword id="KW-0732">Signal</keyword>
<proteinExistence type="evidence at protein level"/>
<dbReference type="EC" id="1.14.99.56" evidence="7 8 9 10 11 12 13"/>
<dbReference type="EMBL" id="CM002236">
    <property type="protein sequence ID" value="EAA36362.1"/>
    <property type="molecule type" value="Genomic_DNA"/>
</dbReference>
<dbReference type="RefSeq" id="XP_965598.1">
    <property type="nucleotide sequence ID" value="XM_960505.2"/>
</dbReference>
<dbReference type="PDB" id="4D7U">
    <property type="method" value="X-ray"/>
    <property type="resolution" value="1.56 A"/>
    <property type="chains" value="A/B=17-243"/>
</dbReference>
<dbReference type="PDB" id="4D7V">
    <property type="method" value="X-ray"/>
    <property type="resolution" value="1.90 A"/>
    <property type="chains" value="A/B=17-243"/>
</dbReference>
<dbReference type="PDBsum" id="4D7U"/>
<dbReference type="PDBsum" id="4D7V"/>
<dbReference type="SMR" id="Q7SHI8"/>
<dbReference type="STRING" id="367110.Q7SHI8"/>
<dbReference type="CAZy" id="AA9">
    <property type="family name" value="Auxiliary Activities 9"/>
</dbReference>
<dbReference type="CAZy" id="CBM1">
    <property type="family name" value="Carbohydrate-Binding Module Family 1"/>
</dbReference>
<dbReference type="PaxDb" id="5141-EFNCRP00000002270"/>
<dbReference type="EnsemblFungi" id="EAA36362">
    <property type="protein sequence ID" value="EAA36362"/>
    <property type="gene ID" value="NCU02916"/>
</dbReference>
<dbReference type="GeneID" id="3881723"/>
<dbReference type="KEGG" id="ncr:NCU02916"/>
<dbReference type="VEuPathDB" id="FungiDB:NCU02916"/>
<dbReference type="HOGENOM" id="CLU_031730_0_2_1"/>
<dbReference type="InParanoid" id="Q7SHI8"/>
<dbReference type="OMA" id="TSGLKWF"/>
<dbReference type="OrthoDB" id="2525337at2759"/>
<dbReference type="BRENDA" id="1.14.99.54">
    <property type="organism ID" value="3627"/>
</dbReference>
<dbReference type="BRENDA" id="1.14.99.B10">
    <property type="organism ID" value="3627"/>
</dbReference>
<dbReference type="EvolutionaryTrace" id="Q7SHI8"/>
<dbReference type="Proteomes" id="UP000001805">
    <property type="component" value="Chromosome 1, Linkage Group I"/>
</dbReference>
<dbReference type="GO" id="GO:0005576">
    <property type="term" value="C:extracellular region"/>
    <property type="evidence" value="ECO:0007669"/>
    <property type="project" value="UniProtKB-SubCell"/>
</dbReference>
<dbReference type="GO" id="GO:0030248">
    <property type="term" value="F:cellulose binding"/>
    <property type="evidence" value="ECO:0007669"/>
    <property type="project" value="InterPro"/>
</dbReference>
<dbReference type="GO" id="GO:0046872">
    <property type="term" value="F:metal ion binding"/>
    <property type="evidence" value="ECO:0007669"/>
    <property type="project" value="UniProtKB-KW"/>
</dbReference>
<dbReference type="GO" id="GO:0004497">
    <property type="term" value="F:monooxygenase activity"/>
    <property type="evidence" value="ECO:0007669"/>
    <property type="project" value="UniProtKB-KW"/>
</dbReference>
<dbReference type="GO" id="GO:0030245">
    <property type="term" value="P:cellulose catabolic process"/>
    <property type="evidence" value="ECO:0007669"/>
    <property type="project" value="UniProtKB-KW"/>
</dbReference>
<dbReference type="CDD" id="cd21175">
    <property type="entry name" value="LPMO_AA9"/>
    <property type="match status" value="1"/>
</dbReference>
<dbReference type="Gene3D" id="2.70.50.70">
    <property type="match status" value="1"/>
</dbReference>
<dbReference type="InterPro" id="IPR049892">
    <property type="entry name" value="AA9"/>
</dbReference>
<dbReference type="InterPro" id="IPR005103">
    <property type="entry name" value="AA9_LPMO"/>
</dbReference>
<dbReference type="InterPro" id="IPR035971">
    <property type="entry name" value="CBD_sf"/>
</dbReference>
<dbReference type="InterPro" id="IPR000254">
    <property type="entry name" value="Cellulose-bd_dom_fun"/>
</dbReference>
<dbReference type="PANTHER" id="PTHR33353:SF13">
    <property type="entry name" value="ENDOGLUCANASE II"/>
    <property type="match status" value="1"/>
</dbReference>
<dbReference type="PANTHER" id="PTHR33353">
    <property type="entry name" value="PUTATIVE (AFU_ORTHOLOGUE AFUA_1G12560)-RELATED"/>
    <property type="match status" value="1"/>
</dbReference>
<dbReference type="Pfam" id="PF03443">
    <property type="entry name" value="AA9"/>
    <property type="match status" value="1"/>
</dbReference>
<dbReference type="Pfam" id="PF00734">
    <property type="entry name" value="CBM_1"/>
    <property type="match status" value="1"/>
</dbReference>
<dbReference type="SMART" id="SM00236">
    <property type="entry name" value="fCBD"/>
    <property type="match status" value="1"/>
</dbReference>
<dbReference type="SUPFAM" id="SSF57180">
    <property type="entry name" value="Cellulose-binding domain"/>
    <property type="match status" value="1"/>
</dbReference>
<dbReference type="PROSITE" id="PS00562">
    <property type="entry name" value="CBM1_1"/>
    <property type="match status" value="1"/>
</dbReference>
<dbReference type="PROSITE" id="PS51164">
    <property type="entry name" value="CBM1_2"/>
    <property type="match status" value="1"/>
</dbReference>
<accession>Q7SHI8</accession>
<comment type="function">
    <text evidence="6 7 8 9 10 11 12 13">Lytic polysaccharide monooxygenase (LPMO) that depolymerizes crystalline and amorphous polysaccharides via the oxidation of scissile alpha- or beta-(1-4)-glycosidic bonds, yielding C4 oxidation products (PubMed:23102010, PubMed:24324265, PubMed:24733907, PubMed:26178376, PubMed:30238672, PubMed:31835532, PubMed:35080911, PubMed:36271009). Catalysis by LPMOs requires the reduction of the active-site copper from Cu(II) to Cu(I) by a reducing agent and H(2)O(2) or O(2) as a cosubstrate (PubMed:36271009). Degrades various hemicelluloses, in particular xyloglucan (PubMed:24733907, PubMed:31835532). Active on tamarind xyloglucan and konjac glucomannan (PubMed:26178376). Acts on the glucose backbone of xyloglucan, accepting various substitutions (xylose, galactose) in almost allpositions (PubMed:24733907). In contrast to all previously characterized LPMOs, which are active only on polysaccharides, is able to cleave soluble cello-oligosaccharides as short as a tetramer (PubMed:24324265). The cello-oligosaccharide products released by this enzyme contain a C4 gemdiol/keto group at the non-reducing end (PubMed:24324265). Binds to the inner wood cell wall layer and consumes enzymatically generated H(2)O(2) (PubMed:36271009).</text>
</comment>
<comment type="catalytic activity">
    <reaction evidence="7 8 9 10 11 12 13">
        <text>[(1-&gt;4)-beta-D-glucosyl]n+m + reduced acceptor + O2 = 4-dehydro-beta-D-glucosyl-[(1-&gt;4)-beta-D-glucosyl]n-1 + [(1-&gt;4)-beta-D-glucosyl]m + acceptor + H2O.</text>
        <dbReference type="EC" id="1.14.99.56"/>
    </reaction>
</comment>
<comment type="cofactor">
    <cofactor evidence="9">
        <name>Cu(2+)</name>
        <dbReference type="ChEBI" id="CHEBI:29036"/>
    </cofactor>
    <text evidence="9">Binds 1 copper ion per subunit.</text>
</comment>
<comment type="activity regulation">
    <text evidence="13">Activity in inhibited by excessive amounts of H(2)O(2).</text>
</comment>
<comment type="biophysicochemical properties">
    <kinetics>
        <KM evidence="11">2.8 uM for H(2)O(2)</KM>
    </kinetics>
</comment>
<comment type="subcellular location">
    <subcellularLocation>
        <location evidence="6 13">Secreted</location>
    </subcellularLocation>
    <text evidence="13">Localizes to the inner cell wall of wood.</text>
</comment>
<comment type="induction">
    <text evidence="6">Expression is induced 85-fold during growth on Miscanthus.</text>
</comment>
<comment type="domain">
    <text evidence="9 10 11">Has a modular structure: an endo-beta-1,4-glucanase catalytic module at the N-terminus, a linker rich in serines and threonines, and a C-terminal carbohydrate-binding module (CBM). The CBM domain is essential for binding to and subsequent oxidative degradation of polysaccharide substrate.</text>
</comment>
<comment type="biotechnology">
    <text evidence="8 13">Lignocellulose is the most abundant polymeric composite on Earth and is a recalcitrant but promising renewable substrate for industrial biotechnology applications. Together with cellobiose dehydrogenases (CDHs) an enzymatic system capable of oxidative cellulose cleavage is formed, which increases the efficiency of cellulases and put LPMOs at focus of biofuel research.</text>
</comment>
<comment type="similarity">
    <text evidence="16">Belongs to the polysaccharide monooxygenase AA9 family.</text>
</comment>